<proteinExistence type="evidence at protein level"/>
<name>RL32_PYRFU</name>
<accession>Q9HH82</accession>
<accession>Q7LWX6</accession>
<feature type="chain" id="PRO_0000131161" description="Large ribosomal subunit protein eL32">
    <location>
        <begin position="1"/>
        <end position="130"/>
    </location>
</feature>
<keyword id="KW-0002">3D-structure</keyword>
<keyword id="KW-1185">Reference proteome</keyword>
<keyword id="KW-0687">Ribonucleoprotein</keyword>
<keyword id="KW-0689">Ribosomal protein</keyword>
<evidence type="ECO:0000255" key="1">
    <source>
        <dbReference type="HAMAP-Rule" id="MF_00810"/>
    </source>
</evidence>
<evidence type="ECO:0000269" key="2">
    <source>
    </source>
</evidence>
<evidence type="ECO:0007744" key="3">
    <source>
        <dbReference type="PDB" id="4V6U"/>
    </source>
</evidence>
<organism>
    <name type="scientific">Pyrococcus furiosus (strain ATCC 43587 / DSM 3638 / JCM 8422 / Vc1)</name>
    <dbReference type="NCBI Taxonomy" id="186497"/>
    <lineage>
        <taxon>Archaea</taxon>
        <taxon>Methanobacteriati</taxon>
        <taxon>Methanobacteriota</taxon>
        <taxon>Thermococci</taxon>
        <taxon>Thermococcales</taxon>
        <taxon>Thermococcaceae</taxon>
        <taxon>Pyrococcus</taxon>
    </lineage>
</organism>
<sequence>MDEKEFKRLLRVRARLKRKKPRFLRQEWWRYPKFKNDPKWRRPKGIDSKMRLKLKGKPRSPSIGWSSPKLVRGLHPSGYEEVLVHNVKELEALDPKRQAARIAHTVGKKKRIEIIKRAEELGIKVLNPRV</sequence>
<protein>
    <recommendedName>
        <fullName evidence="1">Large ribosomal subunit protein eL32</fullName>
    </recommendedName>
    <alternativeName>
        <fullName>50S ribosomal protein L32e</fullName>
    </alternativeName>
    <alternativeName>
        <fullName>PfeL32</fullName>
    </alternativeName>
</protein>
<comment type="subunit">
    <text evidence="2">Part of the 50S ribosomal subunit.</text>
</comment>
<comment type="similarity">
    <text evidence="1">Belongs to the eukaryotic ribosomal protein eL32 family.</text>
</comment>
<reference key="1">
    <citation type="journal article" date="2000" name="FEBS Lett.">
        <title>5S rRNA binding proteins from the hyperthermophilic archaeon, Pyrococcus furiosus.</title>
        <authorList>
            <person name="Furumoto H."/>
            <person name="Taguchi A."/>
            <person name="Itoh T."/>
            <person name="Morinaga T."/>
            <person name="Itoh T."/>
        </authorList>
    </citation>
    <scope>NUCLEOTIDE SEQUENCE [GENOMIC DNA]</scope>
    <source>
        <strain>ATCC 43587 / DSM 3638 / JCM 8422 / Vc1</strain>
    </source>
</reference>
<reference key="2">
    <citation type="journal article" date="1999" name="Genetics">
        <title>Divergence of the hyperthermophilic archaea Pyrococcus furiosus and P. horikoshii inferred from complete genomic sequences.</title>
        <authorList>
            <person name="Maeder D.L."/>
            <person name="Weiss R.B."/>
            <person name="Dunn D.M."/>
            <person name="Cherry J.L."/>
            <person name="Gonzalez J.M."/>
            <person name="DiRuggiero J."/>
            <person name="Robb F.T."/>
        </authorList>
    </citation>
    <scope>NUCLEOTIDE SEQUENCE [LARGE SCALE GENOMIC DNA]</scope>
    <source>
        <strain>ATCC 43587 / DSM 3638 / JCM 8422 / Vc1</strain>
    </source>
</reference>
<reference evidence="3" key="3">
    <citation type="journal article" date="2013" name="Nucleic Acids Res.">
        <title>Promiscuous behaviour of archaeal ribosomal proteins: implications for eukaryotic ribosome evolution.</title>
        <authorList>
            <person name="Armache J.P."/>
            <person name="Anger A.M."/>
            <person name="Marquez V."/>
            <person name="Franckenberg S."/>
            <person name="Frohlich T."/>
            <person name="Villa E."/>
            <person name="Berninghausen O."/>
            <person name="Thomm M."/>
            <person name="Arnold G.J."/>
            <person name="Beckmann R."/>
            <person name="Wilson D.N."/>
        </authorList>
    </citation>
    <scope>STRUCTURE BY ELECTRON MICROSCOPY (6.60 ANGSTROMS) IN THE 70S RIBOSOME</scope>
    <scope>SUBUNIT</scope>
</reference>
<gene>
    <name evidence="1" type="primary">rpl32e</name>
    <name type="ordered locus">PF1807</name>
</gene>
<dbReference type="EMBL" id="AB040118">
    <property type="protein sequence ID" value="BAB13701.1"/>
    <property type="molecule type" value="Genomic_DNA"/>
</dbReference>
<dbReference type="EMBL" id="AE009950">
    <property type="protein sequence ID" value="AAL81931.1"/>
    <property type="molecule type" value="Genomic_DNA"/>
</dbReference>
<dbReference type="RefSeq" id="WP_011012948.1">
    <property type="nucleotide sequence ID" value="NZ_CP023154.1"/>
</dbReference>
<dbReference type="PDB" id="4V6U">
    <property type="method" value="EM"/>
    <property type="resolution" value="6.60 A"/>
    <property type="chains" value="Bb=1-130"/>
</dbReference>
<dbReference type="PDBsum" id="4V6U"/>
<dbReference type="SMR" id="Q9HH82"/>
<dbReference type="STRING" id="186497.PF1807"/>
<dbReference type="PaxDb" id="186497-PF1807"/>
<dbReference type="KEGG" id="pfu:PF1807"/>
<dbReference type="PATRIC" id="fig|186497.12.peg.1878"/>
<dbReference type="eggNOG" id="arCOG00781">
    <property type="taxonomic scope" value="Archaea"/>
</dbReference>
<dbReference type="HOGENOM" id="CLU_071479_3_1_2"/>
<dbReference type="OrthoDB" id="372100at2157"/>
<dbReference type="PhylomeDB" id="Q9HH82"/>
<dbReference type="Proteomes" id="UP000001013">
    <property type="component" value="Chromosome"/>
</dbReference>
<dbReference type="GO" id="GO:0022625">
    <property type="term" value="C:cytosolic large ribosomal subunit"/>
    <property type="evidence" value="ECO:0007669"/>
    <property type="project" value="TreeGrafter"/>
</dbReference>
<dbReference type="GO" id="GO:0003735">
    <property type="term" value="F:structural constituent of ribosome"/>
    <property type="evidence" value="ECO:0007669"/>
    <property type="project" value="InterPro"/>
</dbReference>
<dbReference type="GO" id="GO:0006412">
    <property type="term" value="P:translation"/>
    <property type="evidence" value="ECO:0007669"/>
    <property type="project" value="UniProtKB-UniRule"/>
</dbReference>
<dbReference type="CDD" id="cd00513">
    <property type="entry name" value="Ribosomal_L32_L32e"/>
    <property type="match status" value="1"/>
</dbReference>
<dbReference type="HAMAP" id="MF_00810">
    <property type="entry name" value="Ribosomal_eL32"/>
    <property type="match status" value="1"/>
</dbReference>
<dbReference type="InterPro" id="IPR001515">
    <property type="entry name" value="Ribosomal_eL32"/>
</dbReference>
<dbReference type="InterPro" id="IPR023654">
    <property type="entry name" value="Ribosomal_eL32_arc"/>
</dbReference>
<dbReference type="InterPro" id="IPR018263">
    <property type="entry name" value="Ribosomal_eL32_CS"/>
</dbReference>
<dbReference type="InterPro" id="IPR036351">
    <property type="entry name" value="Ribosomal_eL32_sf"/>
</dbReference>
<dbReference type="NCBIfam" id="NF006332">
    <property type="entry name" value="PRK08562.1"/>
    <property type="match status" value="1"/>
</dbReference>
<dbReference type="PANTHER" id="PTHR23413">
    <property type="entry name" value="60S RIBOSOMAL PROTEIN L32 AND DNA-DIRECTED RNA POLYMERASE II, SUBUNIT N"/>
    <property type="match status" value="1"/>
</dbReference>
<dbReference type="PANTHER" id="PTHR23413:SF1">
    <property type="entry name" value="RIBOSOMAL PROTEIN L32"/>
    <property type="match status" value="1"/>
</dbReference>
<dbReference type="Pfam" id="PF01655">
    <property type="entry name" value="Ribosomal_L32e"/>
    <property type="match status" value="1"/>
</dbReference>
<dbReference type="SMART" id="SM01393">
    <property type="entry name" value="Ribosomal_L32e"/>
    <property type="match status" value="1"/>
</dbReference>
<dbReference type="SUPFAM" id="SSF52042">
    <property type="entry name" value="Ribosomal protein L32e"/>
    <property type="match status" value="1"/>
</dbReference>
<dbReference type="PROSITE" id="PS00580">
    <property type="entry name" value="RIBOSOMAL_L32E"/>
    <property type="match status" value="1"/>
</dbReference>